<sequence length="1501" mass="166204">MATQMVNQATGNSLFCTSTYSSISLDNDMYGLHDLSKADMAAPRLIMLANVALTGELNSGGCDYTLEGERQMAELTTVNDNSFSDSEGDRLEDSPTMDIQSRNFTMDIEPAECSKEGTSENDGTLLSNTLEEEVQKDKKAQAPSTTDDKIKCVKSKPFRCKPCQYKAESEEEFVHHIKIHSAKIYVDNDSKKNPQGKEADSSIPEESDISKGPIQCDGCGYNTNRFDHYLAHLKHHNKAGENERVYKCTICTYSTVSEYHWKKHLRNHYPRILYTCSQCSYFSDRKNNYIQHIRTHTGERPYQCIICLYSSSQKTHLTRHMRTHSGEKPFKCEQCSYVASNQHEVTRHARQVHNGPKPLTCPHCDYKTADRSNFKKHVELHVNPRQFLCPVCDYAASKKCNLQYHIKSRHSGCTNITMNVSKVKLRTKKGEVGDEDADTNKPMENGNIINRSVGKKLEETVKAEKRESCVKAKKRIVGMVDGQVAKKSRLSSTQKKIKASEVRPEKIVDKSRKSSFVKRKTDVLENPNDTQTSTLKKKKLKNARIVNTSEIKYDITKKLTGSVNKKENSFVKNMHKKKTGAQSSNGKKNMPNKITEKKEKGKQLDSKTSVASDITEEQTIVGKVANENYSEQVAASEVASSNVNSDSSESCCLLNDVMQTDLSINTTLETEVSTDHDTKSEHVSKAVMALVMQRDTQMDLSMLVDLKANFSKQEKTQDNLLMDIETISSDLLLQREEPNQVLYQNGIPNKLLREKCGAIADLPVDGAKTTVNLQIGKANFCFQNDCCQPDNLLVDGCKPMELREPSADLLMDHGHPSSDHLVGRGRPPYDHLINCGKSSRDPCVLTWDGEEPTCNKLVEVDEPTSNKLVYSNKSICIQLVGGAEPTKVQPARDEPTSVQPAAAGDEPTRVQPVVPGDEPTSVQPVVPGDEPTSVQLVVTRDKPTSIQTVTVRDEPSIIKTVVAGDEPYIVQTVGDEPSIAQTVEDEQSIVQTVAAKDEPSIAXTAAEDEPSIVQTVXAMDEPAIVQTVAAGDEPTSVQTVAAGDEPTSVQPLSREDPKSVQPIGEDQPTSVQPPGGDEQTNLLINSKTAYLPVCTKEAIGLSVARQDETELLVRRENRSVLSTVWDEPTDLSFERNVQSMNIPIDLSTTNQNPICMSKGMGCPLHLPVEWSEPFNLSMDMDWHKPANLSLVEPSDLSVRKGDSADLSLNNKKPADLSVVWGEPVDLSLGRSEPADLSVGMNQPAELKMGIPDTIGLLVEGRQLSVLTMGRGVESFDLLMGRVDHIDLSVERCEPIDLSVEKGIPRNLEISEGKHFGKLDNCYNLNCAAFQIKDQAKCNIIPENTSQSNTKLSVEIAEPHNHLQSMCVPSELHGNLDTTVQQSKHNECNNGTKEVGTSQLPCAVSRCVSXDEDEGIHSHDGSDISDNVSEMSYDSGLNGVPSVQKTLSSEPKVVINSSETKESFVCIFCDRTFRKEEEYTKHLRRHLVNVYYLKKAAKDIDN</sequence>
<reference key="1">
    <citation type="journal article" date="2006" name="J. Neurosci.">
        <title>RE-1 silencer of transcription/neural restrictive silencer factor modulates ectodermal patterning during Xenopus development.</title>
        <authorList>
            <person name="Olguin P."/>
            <person name="Oteiza P."/>
            <person name="Gamboa E."/>
            <person name="Gomez-Skarmeta J.L."/>
            <person name="Kukuljan M."/>
        </authorList>
    </citation>
    <scope>NUCLEOTIDE SEQUENCE [MRNA]</scope>
    <scope>FUNCTION</scope>
    <scope>DEVELOPMENTAL STAGE</scope>
</reference>
<gene>
    <name type="primary">rest-a</name>
    <name type="synonym">nrsf-a</name>
</gene>
<proteinExistence type="evidence at transcript level"/>
<evidence type="ECO:0000250" key="1">
    <source>
        <dbReference type="UniProtKB" id="Q13127"/>
    </source>
</evidence>
<evidence type="ECO:0000255" key="2">
    <source>
        <dbReference type="PROSITE-ProRule" id="PRU00042"/>
    </source>
</evidence>
<evidence type="ECO:0000256" key="3">
    <source>
        <dbReference type="SAM" id="MobiDB-lite"/>
    </source>
</evidence>
<evidence type="ECO:0000269" key="4">
    <source>
    </source>
</evidence>
<name>RESTA_XENLA</name>
<organism>
    <name type="scientific">Xenopus laevis</name>
    <name type="common">African clawed frog</name>
    <dbReference type="NCBI Taxonomy" id="8355"/>
    <lineage>
        <taxon>Eukaryota</taxon>
        <taxon>Metazoa</taxon>
        <taxon>Chordata</taxon>
        <taxon>Craniata</taxon>
        <taxon>Vertebrata</taxon>
        <taxon>Euteleostomi</taxon>
        <taxon>Amphibia</taxon>
        <taxon>Batrachia</taxon>
        <taxon>Anura</taxon>
        <taxon>Pipoidea</taxon>
        <taxon>Pipidae</taxon>
        <taxon>Xenopodinae</taxon>
        <taxon>Xenopus</taxon>
        <taxon>Xenopus</taxon>
    </lineage>
</organism>
<comment type="function">
    <text evidence="1 4">Transcriptional repressor which binds neuron-restrictive silencer element (NRSE) and represses neuronal gene transcription in non-neuronal cells (By similarity). Plays a role in the early development of the nervous system and is required for proper patterning of the neuroectoderm during gastrulation. This involves the correct speciation of the neuroepithelial domain and adequate development of the non-neural ectoderm.</text>
</comment>
<comment type="subcellular location">
    <subcellularLocation>
        <location evidence="1">Nucleus</location>
    </subcellularLocation>
    <subcellularLocation>
        <location evidence="1">Cytoplasm</location>
    </subcellularLocation>
</comment>
<comment type="developmental stage">
    <text evidence="4">Expressed in whole ectoderm at early gastrula stage. During the early neurula stage, it is restricted to the anterior and lateral neural ridge areas. At the neural tube stage, it is expressed in the presomitic mesoderm. Later, it is detected surrounding the anterior nervous system and the developing eye and slightly in the migratory neural crests.</text>
</comment>
<comment type="domain">
    <text evidence="1">The C2H2-type zinc finger 5 is required for nuclear localization.</text>
</comment>
<dbReference type="EMBL" id="DQ377343">
    <property type="protein sequence ID" value="ABD32117.1"/>
    <property type="molecule type" value="mRNA"/>
</dbReference>
<dbReference type="AGR" id="Xenbase:XB-GENE-6256442"/>
<dbReference type="Xenbase" id="XB-GENE-6256442">
    <property type="gene designation" value="rest.L"/>
</dbReference>
<dbReference type="Proteomes" id="UP000186698">
    <property type="component" value="Unplaced"/>
</dbReference>
<dbReference type="GO" id="GO:0005737">
    <property type="term" value="C:cytoplasm"/>
    <property type="evidence" value="ECO:0000250"/>
    <property type="project" value="UniProtKB"/>
</dbReference>
<dbReference type="GO" id="GO:0005634">
    <property type="term" value="C:nucleus"/>
    <property type="evidence" value="ECO:0000250"/>
    <property type="project" value="UniProtKB"/>
</dbReference>
<dbReference type="GO" id="GO:0008270">
    <property type="term" value="F:zinc ion binding"/>
    <property type="evidence" value="ECO:0007669"/>
    <property type="project" value="UniProtKB-KW"/>
</dbReference>
<dbReference type="GO" id="GO:0045892">
    <property type="term" value="P:negative regulation of DNA-templated transcription"/>
    <property type="evidence" value="ECO:0000250"/>
    <property type="project" value="UniProtKB"/>
</dbReference>
<dbReference type="GO" id="GO:0045666">
    <property type="term" value="P:positive regulation of neuron differentiation"/>
    <property type="evidence" value="ECO:0000250"/>
    <property type="project" value="UniProtKB"/>
</dbReference>
<dbReference type="GO" id="GO:0045944">
    <property type="term" value="P:positive regulation of transcription by RNA polymerase II"/>
    <property type="evidence" value="ECO:0000318"/>
    <property type="project" value="GO_Central"/>
</dbReference>
<dbReference type="GO" id="GO:0000381">
    <property type="term" value="P:regulation of alternative mRNA splicing, via spliceosome"/>
    <property type="evidence" value="ECO:0000250"/>
    <property type="project" value="UniProtKB"/>
</dbReference>
<dbReference type="GO" id="GO:0045667">
    <property type="term" value="P:regulation of osteoblast differentiation"/>
    <property type="evidence" value="ECO:0000250"/>
    <property type="project" value="UniProtKB"/>
</dbReference>
<dbReference type="GO" id="GO:0001666">
    <property type="term" value="P:response to hypoxia"/>
    <property type="evidence" value="ECO:0000250"/>
    <property type="project" value="UniProtKB"/>
</dbReference>
<dbReference type="FunFam" id="3.30.160.60:FF:002187">
    <property type="entry name" value="RE1-silencing transcription factor"/>
    <property type="match status" value="1"/>
</dbReference>
<dbReference type="FunFam" id="3.30.160.60:FF:000662">
    <property type="entry name" value="RE1-silencing transcription factor A"/>
    <property type="match status" value="1"/>
</dbReference>
<dbReference type="FunFam" id="3.30.160.60:FF:000805">
    <property type="entry name" value="RE1-silencing transcription factor B"/>
    <property type="match status" value="1"/>
</dbReference>
<dbReference type="FunFam" id="3.30.160.60:FF:000952">
    <property type="entry name" value="RE1-silencing transcription factor B"/>
    <property type="match status" value="1"/>
</dbReference>
<dbReference type="FunFam" id="3.30.160.60:FF:000395">
    <property type="entry name" value="zinc finger protein 513"/>
    <property type="match status" value="1"/>
</dbReference>
<dbReference type="Gene3D" id="3.30.160.60">
    <property type="entry name" value="Classic Zinc Finger"/>
    <property type="match status" value="5"/>
</dbReference>
<dbReference type="InterPro" id="IPR050688">
    <property type="entry name" value="Zinc_finger/UBP_domain"/>
</dbReference>
<dbReference type="InterPro" id="IPR036236">
    <property type="entry name" value="Znf_C2H2_sf"/>
</dbReference>
<dbReference type="InterPro" id="IPR013087">
    <property type="entry name" value="Znf_C2H2_type"/>
</dbReference>
<dbReference type="PANTHER" id="PTHR24403:SF102">
    <property type="entry name" value="RE1-SILENCING TRANSCRIPTION FACTOR"/>
    <property type="match status" value="1"/>
</dbReference>
<dbReference type="PANTHER" id="PTHR24403">
    <property type="entry name" value="ZINC FINGER PROTEIN"/>
    <property type="match status" value="1"/>
</dbReference>
<dbReference type="Pfam" id="PF24540">
    <property type="entry name" value="zf-C2H2_REST"/>
    <property type="match status" value="1"/>
</dbReference>
<dbReference type="SMART" id="SM00355">
    <property type="entry name" value="ZnF_C2H2"/>
    <property type="match status" value="9"/>
</dbReference>
<dbReference type="SUPFAM" id="SSF57667">
    <property type="entry name" value="beta-beta-alpha zinc fingers"/>
    <property type="match status" value="3"/>
</dbReference>
<dbReference type="PROSITE" id="PS00028">
    <property type="entry name" value="ZINC_FINGER_C2H2_1"/>
    <property type="match status" value="1"/>
</dbReference>
<dbReference type="PROSITE" id="PS50157">
    <property type="entry name" value="ZINC_FINGER_C2H2_2"/>
    <property type="match status" value="6"/>
</dbReference>
<accession>Q2EI21</accession>
<protein>
    <recommendedName>
        <fullName>RE1-silencing transcription factor A</fullName>
    </recommendedName>
    <alternativeName>
        <fullName>Neural-restrictive silencer factor A</fullName>
    </alternativeName>
</protein>
<keyword id="KW-0963">Cytoplasm</keyword>
<keyword id="KW-0217">Developmental protein</keyword>
<keyword id="KW-0479">Metal-binding</keyword>
<keyword id="KW-0539">Nucleus</keyword>
<keyword id="KW-1185">Reference proteome</keyword>
<keyword id="KW-0677">Repeat</keyword>
<keyword id="KW-0678">Repressor</keyword>
<keyword id="KW-0804">Transcription</keyword>
<keyword id="KW-0805">Transcription regulation</keyword>
<keyword id="KW-0862">Zinc</keyword>
<keyword id="KW-0863">Zinc-finger</keyword>
<feature type="chain" id="PRO_0000269551" description="RE1-silencing transcription factor A">
    <location>
        <begin position="1"/>
        <end position="1501"/>
    </location>
</feature>
<feature type="zinc finger region" description="C2H2-type 1" evidence="2">
    <location>
        <begin position="158"/>
        <end position="180"/>
    </location>
</feature>
<feature type="zinc finger region" description="C2H2-type 2" evidence="2">
    <location>
        <begin position="214"/>
        <end position="236"/>
    </location>
</feature>
<feature type="zinc finger region" description="C2H2-type 3" evidence="2">
    <location>
        <begin position="246"/>
        <end position="268"/>
    </location>
</feature>
<feature type="zinc finger region" description="C2H2-type 4" evidence="2">
    <location>
        <begin position="274"/>
        <end position="296"/>
    </location>
</feature>
<feature type="zinc finger region" description="C2H2-type 5" evidence="2">
    <location>
        <begin position="302"/>
        <end position="324"/>
    </location>
</feature>
<feature type="zinc finger region" description="C2H2-type 6" evidence="2">
    <location>
        <begin position="330"/>
        <end position="353"/>
    </location>
</feature>
<feature type="zinc finger region" description="C2H2-type 7" evidence="2">
    <location>
        <begin position="359"/>
        <end position="381"/>
    </location>
</feature>
<feature type="zinc finger region" description="C2H2-type 8" evidence="2">
    <location>
        <begin position="387"/>
        <end position="410"/>
    </location>
</feature>
<feature type="zinc finger region" description="C2H2-type 9" evidence="2">
    <location>
        <begin position="1463"/>
        <end position="1485"/>
    </location>
</feature>
<feature type="region of interest" description="Disordered" evidence="3">
    <location>
        <begin position="186"/>
        <end position="209"/>
    </location>
</feature>
<feature type="region of interest" description="Disordered" evidence="3">
    <location>
        <begin position="491"/>
        <end position="514"/>
    </location>
</feature>
<feature type="region of interest" description="Disordered" evidence="3">
    <location>
        <begin position="569"/>
        <end position="612"/>
    </location>
</feature>
<feature type="region of interest" description="Disordered" evidence="3">
    <location>
        <begin position="885"/>
        <end position="929"/>
    </location>
</feature>
<feature type="region of interest" description="Disordered" evidence="3">
    <location>
        <begin position="1040"/>
        <end position="1079"/>
    </location>
</feature>
<feature type="compositionally biased region" description="Basic and acidic residues" evidence="3">
    <location>
        <begin position="186"/>
        <end position="200"/>
    </location>
</feature>
<feature type="compositionally biased region" description="Basic and acidic residues" evidence="3">
    <location>
        <begin position="498"/>
        <end position="512"/>
    </location>
</feature>
<feature type="compositionally biased region" description="Basic and acidic residues" evidence="3">
    <location>
        <begin position="594"/>
        <end position="605"/>
    </location>
</feature>
<feature type="compositionally biased region" description="Polar residues" evidence="3">
    <location>
        <begin position="1067"/>
        <end position="1079"/>
    </location>
</feature>